<evidence type="ECO:0000255" key="1">
    <source>
        <dbReference type="HAMAP-Rule" id="MF_03124"/>
    </source>
</evidence>
<reference key="1">
    <citation type="journal article" date="2012" name="MBio">
        <title>Comparative genome analysis of Trichophyton rubrum and related dermatophytes reveals candidate genes involved in infection.</title>
        <authorList>
            <person name="Martinez D.A."/>
            <person name="Oliver B.G."/>
            <person name="Graeser Y."/>
            <person name="Goldberg J.M."/>
            <person name="Li W."/>
            <person name="Martinez-Rossi N.M."/>
            <person name="Monod M."/>
            <person name="Shelest E."/>
            <person name="Barton R.C."/>
            <person name="Birch E."/>
            <person name="Brakhage A.A."/>
            <person name="Chen Z."/>
            <person name="Gurr S.J."/>
            <person name="Heiman D."/>
            <person name="Heitman J."/>
            <person name="Kosti I."/>
            <person name="Rossi A."/>
            <person name="Saif S."/>
            <person name="Samalova M."/>
            <person name="Saunders C.W."/>
            <person name="Shea T."/>
            <person name="Summerbell R.C."/>
            <person name="Xu J."/>
            <person name="Young S."/>
            <person name="Zeng Q."/>
            <person name="Birren B.W."/>
            <person name="Cuomo C.A."/>
            <person name="White T.C."/>
        </authorList>
    </citation>
    <scope>NUCLEOTIDE SEQUENCE [LARGE SCALE GENOMIC DNA]</scope>
    <source>
        <strain>ATCC MYA-4605 / CBS 113480</strain>
    </source>
</reference>
<accession>C5FHS6</accession>
<feature type="chain" id="PRO_0000398066" description="Arginine biosynthesis bifunctional protein ArgJ alpha chain" evidence="1">
    <location>
        <begin position="1"/>
        <end position="243"/>
    </location>
</feature>
<feature type="chain" id="PRO_0000398067" description="Arginine biosynthesis bifunctional protein ArgJ beta chain" evidence="1">
    <location>
        <begin position="244"/>
        <end position="476"/>
    </location>
</feature>
<feature type="active site" description="Nucleophile" evidence="1">
    <location>
        <position position="244"/>
    </location>
</feature>
<feature type="binding site" evidence="1">
    <location>
        <position position="204"/>
    </location>
    <ligand>
        <name>substrate</name>
    </ligand>
</feature>
<feature type="binding site" evidence="1">
    <location>
        <position position="233"/>
    </location>
    <ligand>
        <name>substrate</name>
    </ligand>
</feature>
<feature type="binding site" evidence="1">
    <location>
        <position position="244"/>
    </location>
    <ligand>
        <name>substrate</name>
    </ligand>
</feature>
<feature type="binding site" evidence="1">
    <location>
        <position position="331"/>
    </location>
    <ligand>
        <name>substrate</name>
    </ligand>
</feature>
<feature type="binding site" evidence="1">
    <location>
        <position position="471"/>
    </location>
    <ligand>
        <name>substrate</name>
    </ligand>
</feature>
<feature type="binding site" evidence="1">
    <location>
        <position position="476"/>
    </location>
    <ligand>
        <name>substrate</name>
    </ligand>
</feature>
<feature type="site" description="Involved in the stabilization of negative charge on the oxyanion by the formation of the oxyanion hole" evidence="1">
    <location>
        <position position="165"/>
    </location>
</feature>
<feature type="site" description="Involved in the stabilization of negative charge on the oxyanion by the formation of the oxyanion hole" evidence="1">
    <location>
        <position position="166"/>
    </location>
</feature>
<feature type="site" description="Cleavage; by autolysis" evidence="1">
    <location>
        <begin position="243"/>
        <end position="244"/>
    </location>
</feature>
<sequence length="476" mass="50060">MAPKQIRTIGQVSQYVCLLSKPVSPVSGQVRQFTSPVDASIPASKQKFVPSSGTYPKGFKVSGSHAGVKASNTSAPDLALVWSEEPCSAAAVFTTNKFQAAPVQVSSELIRKRNGNGIRGVIVNAGCANAVTGKKGLQDARSMSKKADECNGLKEEDSSTLVMSTGVIGQLLPIERILNKVPEAQSNLASTHAAWLRTARAICTTDTFPKLTSRSFSLPSSPDRTYSIAGMTKGAGMIHPNMATLLGIICTDAPIEAPVLQSLLSHSISRSFNSISVDGDTSTNDTVAILANGAAGGTPISSTGSKDYTAMQSILTQFTQSLAQLVVRDGEGATKFVTVRVKNSPSYTDAKCIASTIARSPLVKTALYGKDANWGRILCAVGYTPDLTPGTVVPERTSVSFKPADGSAELKLLVNGEPESVDEGRASSILQHEDLEIVVDLGGGASGEAGRGGEDAIYWFCDFSHEYVTINGDYRT</sequence>
<comment type="function">
    <text evidence="1">Catalyzes two activities which are involved in the cyclic version of arginine biosynthesis: the synthesis of acetylglutamate from glutamate and acetyl-CoA, and of ornithine by transacetylation between acetylornithine and glutamate.</text>
</comment>
<comment type="catalytic activity">
    <reaction evidence="1">
        <text>N(2)-acetyl-L-ornithine + L-glutamate = N-acetyl-L-glutamate + L-ornithine</text>
        <dbReference type="Rhea" id="RHEA:15349"/>
        <dbReference type="ChEBI" id="CHEBI:29985"/>
        <dbReference type="ChEBI" id="CHEBI:44337"/>
        <dbReference type="ChEBI" id="CHEBI:46911"/>
        <dbReference type="ChEBI" id="CHEBI:57805"/>
        <dbReference type="EC" id="2.3.1.35"/>
    </reaction>
</comment>
<comment type="catalytic activity">
    <reaction evidence="1">
        <text>L-glutamate + acetyl-CoA = N-acetyl-L-glutamate + CoA + H(+)</text>
        <dbReference type="Rhea" id="RHEA:24292"/>
        <dbReference type="ChEBI" id="CHEBI:15378"/>
        <dbReference type="ChEBI" id="CHEBI:29985"/>
        <dbReference type="ChEBI" id="CHEBI:44337"/>
        <dbReference type="ChEBI" id="CHEBI:57287"/>
        <dbReference type="ChEBI" id="CHEBI:57288"/>
        <dbReference type="EC" id="2.3.1.1"/>
    </reaction>
</comment>
<comment type="pathway">
    <text evidence="1">Amino-acid biosynthesis; L-arginine biosynthesis; L-ornithine and N-acetyl-L-glutamate from L-glutamate and N(2)-acetyl-L-ornithine (cyclic): step 1/1.</text>
</comment>
<comment type="pathway">
    <text evidence="1">Amino-acid biosynthesis; L-arginine biosynthesis; N(2)-acetyl-L-ornithine from L-glutamate: step 1/4.</text>
</comment>
<comment type="subunit">
    <text evidence="1">Heterodimer of an alpha and a beta chain.</text>
</comment>
<comment type="subcellular location">
    <subcellularLocation>
        <location evidence="1">Mitochondrion matrix</location>
    </subcellularLocation>
</comment>
<comment type="PTM">
    <text evidence="1">The alpha and beta chains are autoproteolytically processed from a single precursor protein within the mitochondrion.</text>
</comment>
<comment type="miscellaneous">
    <text evidence="1">This protein may be expected to contain an N-terminal transit peptide but none has been predicted.</text>
</comment>
<comment type="similarity">
    <text evidence="1">Belongs to the ArgJ family.</text>
</comment>
<name>ARGJ_ARTOC</name>
<protein>
    <recommendedName>
        <fullName evidence="1">Arginine biosynthesis bifunctional protein ArgJ, mitochondrial</fullName>
    </recommendedName>
    <domain>
        <recommendedName>
            <fullName evidence="1">Glutamate N-acetyltransferase</fullName>
            <shortName evidence="1">GAT</shortName>
            <ecNumber evidence="1">2.3.1.35</ecNumber>
        </recommendedName>
        <alternativeName>
            <fullName evidence="1">Ornithine acetyltransferase</fullName>
            <shortName evidence="1">OATase</shortName>
        </alternativeName>
        <alternativeName>
            <fullName evidence="1">Ornithine transacetylase</fullName>
        </alternativeName>
    </domain>
    <domain>
        <recommendedName>
            <fullName evidence="1">Amino-acid acetyltransferase</fullName>
            <ecNumber evidence="1">2.3.1.1</ecNumber>
        </recommendedName>
        <alternativeName>
            <fullName evidence="1">N-acetylglutamate synthase</fullName>
            <shortName evidence="1">AGS</shortName>
        </alternativeName>
    </domain>
    <component>
        <recommendedName>
            <fullName evidence="1">Arginine biosynthesis bifunctional protein ArgJ alpha chain</fullName>
        </recommendedName>
    </component>
    <component>
        <recommendedName>
            <fullName evidence="1">Arginine biosynthesis bifunctional protein ArgJ beta chain</fullName>
        </recommendedName>
    </component>
</protein>
<dbReference type="EC" id="2.3.1.35" evidence="1"/>
<dbReference type="EC" id="2.3.1.1" evidence="1"/>
<dbReference type="EMBL" id="DS995702">
    <property type="protein sequence ID" value="EEQ28906.1"/>
    <property type="molecule type" value="Genomic_DNA"/>
</dbReference>
<dbReference type="RefSeq" id="XP_002848791.1">
    <property type="nucleotide sequence ID" value="XM_002848745.1"/>
</dbReference>
<dbReference type="SMR" id="C5FHS6"/>
<dbReference type="STRING" id="554155.C5FHS6"/>
<dbReference type="MEROPS" id="T05.001"/>
<dbReference type="GeneID" id="9227770"/>
<dbReference type="VEuPathDB" id="FungiDB:MCYG_01725"/>
<dbReference type="eggNOG" id="KOG2786">
    <property type="taxonomic scope" value="Eukaryota"/>
</dbReference>
<dbReference type="HOGENOM" id="CLU_027172_1_0_1"/>
<dbReference type="OMA" id="WGRIVMA"/>
<dbReference type="OrthoDB" id="2017946at2759"/>
<dbReference type="UniPathway" id="UPA00068">
    <property type="reaction ID" value="UER00106"/>
</dbReference>
<dbReference type="UniPathway" id="UPA00068">
    <property type="reaction ID" value="UER00111"/>
</dbReference>
<dbReference type="Proteomes" id="UP000002035">
    <property type="component" value="Unassembled WGS sequence"/>
</dbReference>
<dbReference type="GO" id="GO:0005759">
    <property type="term" value="C:mitochondrial matrix"/>
    <property type="evidence" value="ECO:0007669"/>
    <property type="project" value="UniProtKB-SubCell"/>
</dbReference>
<dbReference type="GO" id="GO:0004358">
    <property type="term" value="F:glutamate N-acetyltransferase activity"/>
    <property type="evidence" value="ECO:0007669"/>
    <property type="project" value="UniProtKB-UniRule"/>
</dbReference>
<dbReference type="GO" id="GO:0004042">
    <property type="term" value="F:L-glutamate N-acetyltransferase activity"/>
    <property type="evidence" value="ECO:0007669"/>
    <property type="project" value="UniProtKB-UniRule"/>
</dbReference>
<dbReference type="GO" id="GO:0006526">
    <property type="term" value="P:L-arginine biosynthetic process"/>
    <property type="evidence" value="ECO:0007669"/>
    <property type="project" value="UniProtKB-UniRule"/>
</dbReference>
<dbReference type="GO" id="GO:0006592">
    <property type="term" value="P:ornithine biosynthetic process"/>
    <property type="evidence" value="ECO:0007669"/>
    <property type="project" value="EnsemblFungi"/>
</dbReference>
<dbReference type="CDD" id="cd02152">
    <property type="entry name" value="OAT"/>
    <property type="match status" value="1"/>
</dbReference>
<dbReference type="FunFam" id="3.60.70.12:FF:000001">
    <property type="entry name" value="Arginine biosynthesis bifunctional protein ArgJ, chloroplastic"/>
    <property type="match status" value="1"/>
</dbReference>
<dbReference type="FunFam" id="3.10.20.340:FF:000002">
    <property type="entry name" value="Arginine biosynthesis bifunctional protein ArgJ, mitochondrial"/>
    <property type="match status" value="1"/>
</dbReference>
<dbReference type="FunFam" id="3.30.2330.10:FF:000001">
    <property type="entry name" value="Arginine biosynthesis bifunctional protein ArgJ, mitochondrial"/>
    <property type="match status" value="1"/>
</dbReference>
<dbReference type="Gene3D" id="3.30.2330.10">
    <property type="entry name" value="arginine biosynthesis bifunctional protein suprefamily"/>
    <property type="match status" value="1"/>
</dbReference>
<dbReference type="Gene3D" id="3.10.20.340">
    <property type="entry name" value="ArgJ beta chain, C-terminal domain"/>
    <property type="match status" value="1"/>
</dbReference>
<dbReference type="Gene3D" id="3.60.70.12">
    <property type="entry name" value="L-amino peptidase D-ALA esterase/amidase"/>
    <property type="match status" value="1"/>
</dbReference>
<dbReference type="HAMAP" id="MF_01106">
    <property type="entry name" value="ArgJ"/>
    <property type="match status" value="1"/>
</dbReference>
<dbReference type="InterPro" id="IPR002813">
    <property type="entry name" value="Arg_biosynth_ArgJ"/>
</dbReference>
<dbReference type="InterPro" id="IPR016117">
    <property type="entry name" value="ArgJ-like_dom_sf"/>
</dbReference>
<dbReference type="InterPro" id="IPR042195">
    <property type="entry name" value="ArgJ_beta_C"/>
</dbReference>
<dbReference type="NCBIfam" id="TIGR00120">
    <property type="entry name" value="ArgJ"/>
    <property type="match status" value="1"/>
</dbReference>
<dbReference type="NCBIfam" id="NF003802">
    <property type="entry name" value="PRK05388.1"/>
    <property type="match status" value="1"/>
</dbReference>
<dbReference type="PANTHER" id="PTHR23100">
    <property type="entry name" value="ARGININE BIOSYNTHESIS BIFUNCTIONAL PROTEIN ARGJ"/>
    <property type="match status" value="1"/>
</dbReference>
<dbReference type="PANTHER" id="PTHR23100:SF0">
    <property type="entry name" value="ARGININE BIOSYNTHESIS BIFUNCTIONAL PROTEIN ARGJ, MITOCHONDRIAL"/>
    <property type="match status" value="1"/>
</dbReference>
<dbReference type="Pfam" id="PF01960">
    <property type="entry name" value="ArgJ"/>
    <property type="match status" value="1"/>
</dbReference>
<dbReference type="SUPFAM" id="SSF56266">
    <property type="entry name" value="DmpA/ArgJ-like"/>
    <property type="match status" value="1"/>
</dbReference>
<proteinExistence type="inferred from homology"/>
<organism>
    <name type="scientific">Arthroderma otae (strain ATCC MYA-4605 / CBS 113480)</name>
    <name type="common">Microsporum canis</name>
    <dbReference type="NCBI Taxonomy" id="554155"/>
    <lineage>
        <taxon>Eukaryota</taxon>
        <taxon>Fungi</taxon>
        <taxon>Dikarya</taxon>
        <taxon>Ascomycota</taxon>
        <taxon>Pezizomycotina</taxon>
        <taxon>Eurotiomycetes</taxon>
        <taxon>Eurotiomycetidae</taxon>
        <taxon>Onygenales</taxon>
        <taxon>Arthrodermataceae</taxon>
        <taxon>Microsporum</taxon>
    </lineage>
</organism>
<gene>
    <name type="ORF">MCYG_01725</name>
</gene>
<keyword id="KW-0012">Acyltransferase</keyword>
<keyword id="KW-0028">Amino-acid biosynthesis</keyword>
<keyword id="KW-0055">Arginine biosynthesis</keyword>
<keyword id="KW-0068">Autocatalytic cleavage</keyword>
<keyword id="KW-0496">Mitochondrion</keyword>
<keyword id="KW-0511">Multifunctional enzyme</keyword>
<keyword id="KW-1185">Reference proteome</keyword>
<keyword id="KW-0808">Transferase</keyword>